<gene>
    <name type="primary">tgpA</name>
    <name type="ordered locus">PA2873</name>
</gene>
<proteinExistence type="evidence at protein level"/>
<organism>
    <name type="scientific">Pseudomonas aeruginosa (strain ATCC 15692 / DSM 22644 / CIP 104116 / JCM 14847 / LMG 12228 / 1C / PRS 101 / PAO1)</name>
    <dbReference type="NCBI Taxonomy" id="208964"/>
    <lineage>
        <taxon>Bacteria</taxon>
        <taxon>Pseudomonadati</taxon>
        <taxon>Pseudomonadota</taxon>
        <taxon>Gammaproteobacteria</taxon>
        <taxon>Pseudomonadales</taxon>
        <taxon>Pseudomonadaceae</taxon>
        <taxon>Pseudomonas</taxon>
    </lineage>
</organism>
<comment type="function">
    <text evidence="3">Displays transglutaminase activity (TGase) in vitro. Plays a critical role in the viability of P.aeruginosa. Might contribute to an essential function linked to the cell wall.</text>
</comment>
<comment type="catalytic activity">
    <reaction evidence="3">
        <text>L-glutaminyl-[protein] + L-lysyl-[protein] = [protein]-L-lysyl-N(6)-5-L-glutamyl-[protein] + NH4(+)</text>
        <dbReference type="Rhea" id="RHEA:54816"/>
        <dbReference type="Rhea" id="RHEA-COMP:9752"/>
        <dbReference type="Rhea" id="RHEA-COMP:10207"/>
        <dbReference type="Rhea" id="RHEA-COMP:14005"/>
        <dbReference type="ChEBI" id="CHEBI:28938"/>
        <dbReference type="ChEBI" id="CHEBI:29969"/>
        <dbReference type="ChEBI" id="CHEBI:30011"/>
        <dbReference type="ChEBI" id="CHEBI:138370"/>
        <dbReference type="EC" id="2.3.2.13"/>
    </reaction>
</comment>
<comment type="subcellular location">
    <subcellularLocation>
        <location evidence="3">Cell inner membrane</location>
        <topology evidence="3">Multi-pass membrane protein</topology>
    </subcellularLocation>
</comment>
<comment type="induction">
    <text evidence="3">Is expressed in both exponential and stationary phases of growth. Appears to be part of an operon together with PA2874 and PA2875.</text>
</comment>
<comment type="domain">
    <text evidence="3">The transglutaminase activity is contained within the periplasmic domain (180-544).</text>
</comment>
<comment type="disruption phenotype">
    <text evidence="3">Disruption experiments show that tgpA is essential.</text>
</comment>
<comment type="miscellaneous">
    <text evidence="5">Unlike Guinea pig TGase, TGase activity is not affected by EDTA addition, suggesting that TGase activity is Ca(2+)-independent, similar to members of the bacterial transglutaminase family.</text>
</comment>
<comment type="similarity">
    <text evidence="4">Belongs to the transglutaminase-like superfamily.</text>
</comment>
<dbReference type="EC" id="2.3.2.13"/>
<dbReference type="EMBL" id="AE004091">
    <property type="protein sequence ID" value="AAG06261.1"/>
    <property type="molecule type" value="Genomic_DNA"/>
</dbReference>
<dbReference type="PIR" id="F83287">
    <property type="entry name" value="F83287"/>
</dbReference>
<dbReference type="RefSeq" id="NP_251563.1">
    <property type="nucleotide sequence ID" value="NC_002516.2"/>
</dbReference>
<dbReference type="RefSeq" id="WP_003114743.1">
    <property type="nucleotide sequence ID" value="NZ_QZGE01000011.1"/>
</dbReference>
<dbReference type="PDB" id="6G49">
    <property type="method" value="X-ray"/>
    <property type="resolution" value="1.60 A"/>
    <property type="chains" value="A=180-499"/>
</dbReference>
<dbReference type="PDB" id="6G4H">
    <property type="method" value="X-ray"/>
    <property type="resolution" value="1.80 A"/>
    <property type="chains" value="A=180-499"/>
</dbReference>
<dbReference type="PDBsum" id="6G49"/>
<dbReference type="PDBsum" id="6G4H"/>
<dbReference type="SMR" id="Q9HZX3"/>
<dbReference type="STRING" id="208964.PA2873"/>
<dbReference type="PaxDb" id="208964-PA2873"/>
<dbReference type="GeneID" id="882644"/>
<dbReference type="KEGG" id="pae:PA2873"/>
<dbReference type="PATRIC" id="fig|208964.12.peg.3014"/>
<dbReference type="PseudoCAP" id="PA2873"/>
<dbReference type="HOGENOM" id="CLU_012397_0_0_6"/>
<dbReference type="InParanoid" id="Q9HZX3"/>
<dbReference type="OrthoDB" id="9804872at2"/>
<dbReference type="PhylomeDB" id="Q9HZX3"/>
<dbReference type="BioCyc" id="PAER208964:G1FZ6-2923-MONOMER"/>
<dbReference type="Proteomes" id="UP000002438">
    <property type="component" value="Chromosome"/>
</dbReference>
<dbReference type="GO" id="GO:0005886">
    <property type="term" value="C:plasma membrane"/>
    <property type="evidence" value="ECO:0000314"/>
    <property type="project" value="UniProtKB"/>
</dbReference>
<dbReference type="GO" id="GO:0003810">
    <property type="term" value="F:protein-glutamine gamma-glutamyltransferase activity"/>
    <property type="evidence" value="ECO:0000314"/>
    <property type="project" value="UniProtKB"/>
</dbReference>
<dbReference type="FunFam" id="3.10.620.30:FF:000015">
    <property type="entry name" value="Protein-glutamine gamma-glutamyltransferase"/>
    <property type="match status" value="1"/>
</dbReference>
<dbReference type="Gene3D" id="3.10.620.30">
    <property type="match status" value="1"/>
</dbReference>
<dbReference type="InterPro" id="IPR052901">
    <property type="entry name" value="Bact_TGase-like"/>
</dbReference>
<dbReference type="InterPro" id="IPR038765">
    <property type="entry name" value="Papain-like_cys_pep_sf"/>
</dbReference>
<dbReference type="InterPro" id="IPR025403">
    <property type="entry name" value="TgpA-like_C"/>
</dbReference>
<dbReference type="InterPro" id="IPR021878">
    <property type="entry name" value="TgpA_N"/>
</dbReference>
<dbReference type="InterPro" id="IPR002931">
    <property type="entry name" value="Transglutaminase-like"/>
</dbReference>
<dbReference type="PANTHER" id="PTHR42736">
    <property type="entry name" value="PROTEIN-GLUTAMINE GAMMA-GLUTAMYLTRANSFERASE"/>
    <property type="match status" value="1"/>
</dbReference>
<dbReference type="PANTHER" id="PTHR42736:SF1">
    <property type="entry name" value="PROTEIN-GLUTAMINE GAMMA-GLUTAMYLTRANSFERASE"/>
    <property type="match status" value="1"/>
</dbReference>
<dbReference type="Pfam" id="PF13559">
    <property type="entry name" value="DUF4129"/>
    <property type="match status" value="1"/>
</dbReference>
<dbReference type="Pfam" id="PF11992">
    <property type="entry name" value="TgpA_N"/>
    <property type="match status" value="1"/>
</dbReference>
<dbReference type="Pfam" id="PF01841">
    <property type="entry name" value="Transglut_core"/>
    <property type="match status" value="1"/>
</dbReference>
<dbReference type="SMART" id="SM00460">
    <property type="entry name" value="TGc"/>
    <property type="match status" value="1"/>
</dbReference>
<dbReference type="SUPFAM" id="SSF54001">
    <property type="entry name" value="Cysteine proteinases"/>
    <property type="match status" value="1"/>
</dbReference>
<keyword id="KW-0002">3D-structure</keyword>
<keyword id="KW-0012">Acyltransferase</keyword>
<keyword id="KW-0997">Cell inner membrane</keyword>
<keyword id="KW-1003">Cell membrane</keyword>
<keyword id="KW-0472">Membrane</keyword>
<keyword id="KW-1185">Reference proteome</keyword>
<keyword id="KW-0808">Transferase</keyword>
<keyword id="KW-0812">Transmembrane</keyword>
<keyword id="KW-1133">Transmembrane helix</keyword>
<reference key="1">
    <citation type="journal article" date="2000" name="Nature">
        <title>Complete genome sequence of Pseudomonas aeruginosa PAO1, an opportunistic pathogen.</title>
        <authorList>
            <person name="Stover C.K."/>
            <person name="Pham X.-Q.T."/>
            <person name="Erwin A.L."/>
            <person name="Mizoguchi S.D."/>
            <person name="Warrener P."/>
            <person name="Hickey M.J."/>
            <person name="Brinkman F.S.L."/>
            <person name="Hufnagle W.O."/>
            <person name="Kowalik D.J."/>
            <person name="Lagrou M."/>
            <person name="Garber R.L."/>
            <person name="Goltry L."/>
            <person name="Tolentino E."/>
            <person name="Westbrock-Wadman S."/>
            <person name="Yuan Y."/>
            <person name="Brody L.L."/>
            <person name="Coulter S.N."/>
            <person name="Folger K.R."/>
            <person name="Kas A."/>
            <person name="Larbig K."/>
            <person name="Lim R.M."/>
            <person name="Smith K.A."/>
            <person name="Spencer D.H."/>
            <person name="Wong G.K.-S."/>
            <person name="Wu Z."/>
            <person name="Paulsen I.T."/>
            <person name="Reizer J."/>
            <person name="Saier M.H. Jr."/>
            <person name="Hancock R.E.W."/>
            <person name="Lory S."/>
            <person name="Olson M.V."/>
        </authorList>
    </citation>
    <scope>NUCLEOTIDE SEQUENCE [LARGE SCALE GENOMIC DNA]</scope>
    <source>
        <strain>ATCC 15692 / DSM 22644 / CIP 104116 / JCM 14847 / LMG 12228 / 1C / PRS 101 / PAO1</strain>
    </source>
</reference>
<reference key="2">
    <citation type="journal article" date="2012" name="PLoS ONE">
        <title>TgpA, a protein with a eukaryotic-like transglutaminase domain, plays a critical role in the viability of Pseudomonas aeruginosa.</title>
        <authorList>
            <person name="Milani A."/>
            <person name="Vecchietti D."/>
            <person name="Rusmini R."/>
            <person name="Bertoni G."/>
        </authorList>
    </citation>
    <scope>FUNCTION</scope>
    <scope>CATALYTIC ACTIVITY</scope>
    <scope>GENE NAME</scope>
    <scope>DOMAIN</scope>
    <scope>SUBCELLULAR LOCATION</scope>
    <scope>TOPOLOGY</scope>
    <scope>DISRUPTION PHENOTYPE</scope>
    <scope>INDUCTION</scope>
    <source>
        <strain>ATCC 15692 / DSM 22644 / CIP 104116 / JCM 14847 / LMG 12228 / 1C / PRS 101 / PAO1</strain>
    </source>
</reference>
<protein>
    <recommendedName>
        <fullName>Protein-glutamine gamma-glutamyltransferase</fullName>
        <ecNumber>2.3.2.13</ecNumber>
    </recommendedName>
    <alternativeName>
        <fullName>Transglutaminase protein A</fullName>
        <shortName>TGase A</shortName>
    </alternativeName>
</protein>
<evidence type="ECO:0000250" key="1"/>
<evidence type="ECO:0000255" key="2"/>
<evidence type="ECO:0000269" key="3">
    <source>
    </source>
</evidence>
<evidence type="ECO:0000305" key="4"/>
<evidence type="ECO:0000305" key="5">
    <source>
    </source>
</evidence>
<evidence type="ECO:0007829" key="6">
    <source>
        <dbReference type="PDB" id="6G49"/>
    </source>
</evidence>
<sequence>MNAIPRVALVWLLVAQVLVILPHLAYMPLWIAAMWLGCAAWRVQVFRMRAGYPRAWVKLALALLAGAGVWLSRGSLVGLDAGAVLLIAAFILKLVEMKTRRDALVLVFLGFFAVVVGYLFDDGFLAALYSLLPVTALLAALIGLQQSAFASRPWPTLRLAGGLLLQALPLMLLLFLFFPRLGPLWSLPMPGNKGVTGLSESMAPGDIAELGRSAELAFRVRFEGALPPREQLYWRALTMERFDGRRWAQAPQWSGEDALHWQKRGPELRYDVIMQPSSQPWLFALDVAQTDQTDTRLMSDFHLQRRQPVEQRLFYRVSSWPQALRESSIDPRTRWRNLQLPMHGNPRARALADELRQAHAQPQALVAALLQRFNHEPFAYTLKPPATGADGVDDFLFDTRSGFCAHYAGAMAFVLRAAGIPARVVAGYQGGELNPAGNYLLVHQFDAHAWVEYWQPEQGWLSVDPTYQVAPERIEQGLEQALAGDSEYLADAPLSPLRYRGLPWLNDMRLAWDSLNYGWQRWVLAYQGEQQGAFLQRWFGGLDPTRLGLLLGAAAILSVGLLALFLLKPWQGRGDLRSRQLRRFERLLEMHGLRRSPGEGLRSYGERAARVLPAQAPAIAAFVGAFEAQRYGHGGADDPGLRLRALRRALPWRLVRTPTRDGRGEEQA</sequence>
<accession>Q9HZX3</accession>
<feature type="chain" id="PRO_0000422419" description="Protein-glutamine gamma-glutamyltransferase">
    <location>
        <begin position="1"/>
        <end position="668"/>
    </location>
</feature>
<feature type="topological domain" description="Cytoplasmic" evidence="2">
    <location>
        <begin position="1"/>
        <end position="6"/>
    </location>
</feature>
<feature type="transmembrane region" description="Helical" evidence="2">
    <location>
        <begin position="7"/>
        <end position="27"/>
    </location>
</feature>
<feature type="topological domain" description="Periplasmic" evidence="2">
    <location>
        <begin position="28"/>
        <end position="50"/>
    </location>
</feature>
<feature type="transmembrane region" description="Helical" evidence="2">
    <location>
        <begin position="51"/>
        <end position="71"/>
    </location>
</feature>
<feature type="topological domain" description="Cytoplasmic" evidence="2">
    <location>
        <begin position="72"/>
        <end position="74"/>
    </location>
</feature>
<feature type="transmembrane region" description="Helical" evidence="2">
    <location>
        <begin position="75"/>
        <end position="95"/>
    </location>
</feature>
<feature type="topological domain" description="Periplasmic" evidence="2">
    <location>
        <begin position="96"/>
        <end position="103"/>
    </location>
</feature>
<feature type="transmembrane region" description="Helical" evidence="2">
    <location>
        <begin position="104"/>
        <end position="124"/>
    </location>
</feature>
<feature type="transmembrane region" description="Helical" evidence="2">
    <location>
        <begin position="125"/>
        <end position="145"/>
    </location>
</feature>
<feature type="topological domain" description="Cytoplasmic" evidence="2">
    <location>
        <begin position="146"/>
        <end position="158"/>
    </location>
</feature>
<feature type="transmembrane region" description="Helical" evidence="2">
    <location>
        <begin position="159"/>
        <end position="179"/>
    </location>
</feature>
<feature type="topological domain" description="Periplasmic" evidence="2">
    <location>
        <begin position="180"/>
        <end position="548"/>
    </location>
</feature>
<feature type="transmembrane region" description="Helical" evidence="2">
    <location>
        <begin position="549"/>
        <end position="569"/>
    </location>
</feature>
<feature type="topological domain" description="Cytoplasmic" evidence="2">
    <location>
        <begin position="570"/>
        <end position="668"/>
    </location>
</feature>
<feature type="active site" description="Nucleophile" evidence="1">
    <location>
        <position position="404"/>
    </location>
</feature>
<feature type="active site" evidence="1">
    <location>
        <position position="448"/>
    </location>
</feature>
<feature type="active site" evidence="1">
    <location>
        <position position="464"/>
    </location>
</feature>
<feature type="strand" evidence="6">
    <location>
        <begin position="200"/>
        <end position="202"/>
    </location>
</feature>
<feature type="helix" evidence="6">
    <location>
        <begin position="206"/>
        <end position="211"/>
    </location>
</feature>
<feature type="strand" evidence="6">
    <location>
        <begin position="216"/>
        <end position="225"/>
    </location>
</feature>
<feature type="helix" evidence="6">
    <location>
        <begin position="229"/>
        <end position="231"/>
    </location>
</feature>
<feature type="strand" evidence="6">
    <location>
        <begin position="233"/>
        <end position="239"/>
    </location>
</feature>
<feature type="turn" evidence="6">
    <location>
        <begin position="258"/>
        <end position="260"/>
    </location>
</feature>
<feature type="strand" evidence="6">
    <location>
        <begin position="268"/>
        <end position="274"/>
    </location>
</feature>
<feature type="strand" evidence="6">
    <location>
        <begin position="278"/>
        <end position="282"/>
    </location>
</feature>
<feature type="strand" evidence="6">
    <location>
        <begin position="284"/>
        <end position="291"/>
    </location>
</feature>
<feature type="strand" evidence="6">
    <location>
        <begin position="295"/>
        <end position="298"/>
    </location>
</feature>
<feature type="strand" evidence="6">
    <location>
        <begin position="303"/>
        <end position="307"/>
    </location>
</feature>
<feature type="strand" evidence="6">
    <location>
        <begin position="313"/>
        <end position="319"/>
    </location>
</feature>
<feature type="helix" evidence="6">
    <location>
        <begin position="331"/>
        <end position="336"/>
    </location>
</feature>
<feature type="strand" evidence="6">
    <location>
        <begin position="342"/>
        <end position="344"/>
    </location>
</feature>
<feature type="helix" evidence="6">
    <location>
        <begin position="346"/>
        <end position="358"/>
    </location>
</feature>
<feature type="helix" evidence="6">
    <location>
        <begin position="362"/>
        <end position="375"/>
    </location>
</feature>
<feature type="helix" evidence="6">
    <location>
        <begin position="391"/>
        <end position="397"/>
    </location>
</feature>
<feature type="helix" evidence="6">
    <location>
        <begin position="404"/>
        <end position="417"/>
    </location>
</feature>
<feature type="strand" evidence="6">
    <location>
        <begin position="422"/>
        <end position="429"/>
    </location>
</feature>
<feature type="strand" evidence="6">
    <location>
        <begin position="432"/>
        <end position="434"/>
    </location>
</feature>
<feature type="turn" evidence="6">
    <location>
        <begin position="435"/>
        <end position="438"/>
    </location>
</feature>
<feature type="strand" evidence="6">
    <location>
        <begin position="439"/>
        <end position="443"/>
    </location>
</feature>
<feature type="helix" evidence="6">
    <location>
        <begin position="444"/>
        <end position="446"/>
    </location>
</feature>
<feature type="strand" evidence="6">
    <location>
        <begin position="447"/>
        <end position="455"/>
    </location>
</feature>
<feature type="turn" evidence="6">
    <location>
        <begin position="456"/>
        <end position="458"/>
    </location>
</feature>
<feature type="strand" evidence="6">
    <location>
        <begin position="459"/>
        <end position="463"/>
    </location>
</feature>
<feature type="helix" evidence="6">
    <location>
        <begin position="465"/>
        <end position="468"/>
    </location>
</feature>
<feature type="helix" evidence="6">
    <location>
        <begin position="471"/>
        <end position="476"/>
    </location>
</feature>
<feature type="helix" evidence="6">
    <location>
        <begin position="478"/>
        <end position="480"/>
    </location>
</feature>
<name>TGPA_PSEAE</name>